<comment type="function">
    <text evidence="1">Converts 2C-methyl-D-erythritol 2,4-cyclodiphosphate (ME-2,4cPP) into 1-hydroxy-2-methyl-2-(E)-butenyl 4-diphosphate.</text>
</comment>
<comment type="catalytic activity">
    <reaction evidence="1">
        <text>(2E)-4-hydroxy-3-methylbut-2-enyl diphosphate + oxidized [flavodoxin] + H2O + 2 H(+) = 2-C-methyl-D-erythritol 2,4-cyclic diphosphate + reduced [flavodoxin]</text>
        <dbReference type="Rhea" id="RHEA:43604"/>
        <dbReference type="Rhea" id="RHEA-COMP:10622"/>
        <dbReference type="Rhea" id="RHEA-COMP:10623"/>
        <dbReference type="ChEBI" id="CHEBI:15377"/>
        <dbReference type="ChEBI" id="CHEBI:15378"/>
        <dbReference type="ChEBI" id="CHEBI:57618"/>
        <dbReference type="ChEBI" id="CHEBI:58210"/>
        <dbReference type="ChEBI" id="CHEBI:58483"/>
        <dbReference type="ChEBI" id="CHEBI:128753"/>
        <dbReference type="EC" id="1.17.7.3"/>
    </reaction>
</comment>
<comment type="cofactor">
    <cofactor evidence="1">
        <name>[4Fe-4S] cluster</name>
        <dbReference type="ChEBI" id="CHEBI:49883"/>
    </cofactor>
    <text evidence="1">Binds 1 [4Fe-4S] cluster.</text>
</comment>
<comment type="pathway">
    <text evidence="1">Isoprenoid biosynthesis; isopentenyl diphosphate biosynthesis via DXP pathway; isopentenyl diphosphate from 1-deoxy-D-xylulose 5-phosphate: step 5/6.</text>
</comment>
<comment type="similarity">
    <text evidence="1">Belongs to the IspG family.</text>
</comment>
<name>ISPG_ALISL</name>
<organism>
    <name type="scientific">Aliivibrio salmonicida (strain LFI1238)</name>
    <name type="common">Vibrio salmonicida (strain LFI1238)</name>
    <dbReference type="NCBI Taxonomy" id="316275"/>
    <lineage>
        <taxon>Bacteria</taxon>
        <taxon>Pseudomonadati</taxon>
        <taxon>Pseudomonadota</taxon>
        <taxon>Gammaproteobacteria</taxon>
        <taxon>Vibrionales</taxon>
        <taxon>Vibrionaceae</taxon>
        <taxon>Aliivibrio</taxon>
    </lineage>
</organism>
<keyword id="KW-0004">4Fe-4S</keyword>
<keyword id="KW-0408">Iron</keyword>
<keyword id="KW-0411">Iron-sulfur</keyword>
<keyword id="KW-0414">Isoprene biosynthesis</keyword>
<keyword id="KW-0479">Metal-binding</keyword>
<keyword id="KW-0560">Oxidoreductase</keyword>
<protein>
    <recommendedName>
        <fullName evidence="1">4-hydroxy-3-methylbut-2-en-1-yl diphosphate synthase (flavodoxin)</fullName>
        <ecNumber evidence="1">1.17.7.3</ecNumber>
    </recommendedName>
    <alternativeName>
        <fullName evidence="1">1-hydroxy-2-methyl-2-(E)-butenyl 4-diphosphate synthase</fullName>
    </alternativeName>
</protein>
<reference key="1">
    <citation type="journal article" date="2008" name="BMC Genomics">
        <title>The genome sequence of the fish pathogen Aliivibrio salmonicida strain LFI1238 shows extensive evidence of gene decay.</title>
        <authorList>
            <person name="Hjerde E."/>
            <person name="Lorentzen M.S."/>
            <person name="Holden M.T."/>
            <person name="Seeger K."/>
            <person name="Paulsen S."/>
            <person name="Bason N."/>
            <person name="Churcher C."/>
            <person name="Harris D."/>
            <person name="Norbertczak H."/>
            <person name="Quail M.A."/>
            <person name="Sanders S."/>
            <person name="Thurston S."/>
            <person name="Parkhill J."/>
            <person name="Willassen N.P."/>
            <person name="Thomson N.R."/>
        </authorList>
    </citation>
    <scope>NUCLEOTIDE SEQUENCE [LARGE SCALE GENOMIC DNA]</scope>
    <source>
        <strain>LFI1238</strain>
    </source>
</reference>
<proteinExistence type="inferred from homology"/>
<sequence>MHIESPIKRRQSTRIYVGNVPIGDGAPIAVQSMTNTLTTDVAATVAQINALQKVGADIVRVSVPTMDAAEAFKLIKQQVSVPLVADIHFDYRIALKVAEYGVDCLRINPGNIGNEQRIRSVVDCARDNNIPIRIGVNGGSLEKDIQAKYKEPTAEALLESAMRHVDILDRMNFDQFKVSVKASDVFLAVDSYRLLAKQIVQPLHLGITEAGGARAGSVKSAVGLGLLLSEGIGDTLRISLAADPIEEIKVGFDILKSLRIRSRGINFIACPTCSRQEFDVIATVNELEQRLEDLITPMDVSLIGCVVNGPGEAEVSHMGIAGSYRKSAFYEDGIRQKERFDNDNIVDKLEARIRAKAAMLSKENQIDINQID</sequence>
<dbReference type="EC" id="1.17.7.3" evidence="1"/>
<dbReference type="EMBL" id="FM178379">
    <property type="protein sequence ID" value="CAQ78414.1"/>
    <property type="molecule type" value="Genomic_DNA"/>
</dbReference>
<dbReference type="RefSeq" id="WP_012549534.1">
    <property type="nucleotide sequence ID" value="NC_011312.1"/>
</dbReference>
<dbReference type="SMR" id="B6EGY7"/>
<dbReference type="KEGG" id="vsa:VSAL_I0729"/>
<dbReference type="eggNOG" id="COG0821">
    <property type="taxonomic scope" value="Bacteria"/>
</dbReference>
<dbReference type="HOGENOM" id="CLU_042258_0_0_6"/>
<dbReference type="UniPathway" id="UPA00056">
    <property type="reaction ID" value="UER00096"/>
</dbReference>
<dbReference type="Proteomes" id="UP000001730">
    <property type="component" value="Chromosome 1"/>
</dbReference>
<dbReference type="GO" id="GO:0051539">
    <property type="term" value="F:4 iron, 4 sulfur cluster binding"/>
    <property type="evidence" value="ECO:0007669"/>
    <property type="project" value="UniProtKB-UniRule"/>
</dbReference>
<dbReference type="GO" id="GO:0046429">
    <property type="term" value="F:4-hydroxy-3-methylbut-2-en-1-yl diphosphate synthase activity (ferredoxin)"/>
    <property type="evidence" value="ECO:0007669"/>
    <property type="project" value="UniProtKB-UniRule"/>
</dbReference>
<dbReference type="GO" id="GO:0141197">
    <property type="term" value="F:4-hydroxy-3-methylbut-2-enyl-diphosphate synthase activity (flavodoxin)"/>
    <property type="evidence" value="ECO:0007669"/>
    <property type="project" value="UniProtKB-EC"/>
</dbReference>
<dbReference type="GO" id="GO:0005506">
    <property type="term" value="F:iron ion binding"/>
    <property type="evidence" value="ECO:0007669"/>
    <property type="project" value="InterPro"/>
</dbReference>
<dbReference type="GO" id="GO:0019288">
    <property type="term" value="P:isopentenyl diphosphate biosynthetic process, methylerythritol 4-phosphate pathway"/>
    <property type="evidence" value="ECO:0007669"/>
    <property type="project" value="UniProtKB-UniRule"/>
</dbReference>
<dbReference type="GO" id="GO:0016114">
    <property type="term" value="P:terpenoid biosynthetic process"/>
    <property type="evidence" value="ECO:0007669"/>
    <property type="project" value="InterPro"/>
</dbReference>
<dbReference type="FunFam" id="3.20.20.20:FF:000001">
    <property type="entry name" value="4-hydroxy-3-methylbut-2-en-1-yl diphosphate synthase (flavodoxin)"/>
    <property type="match status" value="1"/>
</dbReference>
<dbReference type="FunFam" id="3.30.413.10:FF:000002">
    <property type="entry name" value="4-hydroxy-3-methylbut-2-en-1-yl diphosphate synthase (flavodoxin)"/>
    <property type="match status" value="1"/>
</dbReference>
<dbReference type="Gene3D" id="3.20.20.20">
    <property type="entry name" value="Dihydropteroate synthase-like"/>
    <property type="match status" value="1"/>
</dbReference>
<dbReference type="Gene3D" id="3.30.413.10">
    <property type="entry name" value="Sulfite Reductase Hemoprotein, domain 1"/>
    <property type="match status" value="1"/>
</dbReference>
<dbReference type="HAMAP" id="MF_00159">
    <property type="entry name" value="IspG"/>
    <property type="match status" value="1"/>
</dbReference>
<dbReference type="InterPro" id="IPR011005">
    <property type="entry name" value="Dihydropteroate_synth-like_sf"/>
</dbReference>
<dbReference type="InterPro" id="IPR036849">
    <property type="entry name" value="Enolase-like_C_sf"/>
</dbReference>
<dbReference type="InterPro" id="IPR016425">
    <property type="entry name" value="IspG_bac"/>
</dbReference>
<dbReference type="InterPro" id="IPR004588">
    <property type="entry name" value="IspG_bac-typ"/>
</dbReference>
<dbReference type="InterPro" id="IPR045854">
    <property type="entry name" value="NO2/SO3_Rdtase_4Fe4S_sf"/>
</dbReference>
<dbReference type="NCBIfam" id="TIGR00612">
    <property type="entry name" value="ispG_gcpE"/>
    <property type="match status" value="1"/>
</dbReference>
<dbReference type="NCBIfam" id="NF001540">
    <property type="entry name" value="PRK00366.1"/>
    <property type="match status" value="1"/>
</dbReference>
<dbReference type="PANTHER" id="PTHR30454">
    <property type="entry name" value="4-HYDROXY-3-METHYLBUT-2-EN-1-YL DIPHOSPHATE SYNTHASE"/>
    <property type="match status" value="1"/>
</dbReference>
<dbReference type="PANTHER" id="PTHR30454:SF0">
    <property type="entry name" value="4-HYDROXY-3-METHYLBUT-2-EN-1-YL DIPHOSPHATE SYNTHASE (FERREDOXIN), CHLOROPLASTIC"/>
    <property type="match status" value="1"/>
</dbReference>
<dbReference type="Pfam" id="PF04551">
    <property type="entry name" value="GcpE"/>
    <property type="match status" value="1"/>
</dbReference>
<dbReference type="PIRSF" id="PIRSF004640">
    <property type="entry name" value="IspG"/>
    <property type="match status" value="1"/>
</dbReference>
<dbReference type="SUPFAM" id="SSF51604">
    <property type="entry name" value="Enolase C-terminal domain-like"/>
    <property type="match status" value="1"/>
</dbReference>
<dbReference type="SUPFAM" id="SSF56014">
    <property type="entry name" value="Nitrite and sulphite reductase 4Fe-4S domain-like"/>
    <property type="match status" value="1"/>
</dbReference>
<accession>B6EGY7</accession>
<evidence type="ECO:0000255" key="1">
    <source>
        <dbReference type="HAMAP-Rule" id="MF_00159"/>
    </source>
</evidence>
<gene>
    <name evidence="1" type="primary">ispG</name>
    <name type="ordered locus">VSAL_I0729</name>
</gene>
<feature type="chain" id="PRO_1000097146" description="4-hydroxy-3-methylbut-2-en-1-yl diphosphate synthase (flavodoxin)">
    <location>
        <begin position="1"/>
        <end position="372"/>
    </location>
</feature>
<feature type="binding site" evidence="1">
    <location>
        <position position="270"/>
    </location>
    <ligand>
        <name>[4Fe-4S] cluster</name>
        <dbReference type="ChEBI" id="CHEBI:49883"/>
    </ligand>
</feature>
<feature type="binding site" evidence="1">
    <location>
        <position position="273"/>
    </location>
    <ligand>
        <name>[4Fe-4S] cluster</name>
        <dbReference type="ChEBI" id="CHEBI:49883"/>
    </ligand>
</feature>
<feature type="binding site" evidence="1">
    <location>
        <position position="305"/>
    </location>
    <ligand>
        <name>[4Fe-4S] cluster</name>
        <dbReference type="ChEBI" id="CHEBI:49883"/>
    </ligand>
</feature>
<feature type="binding site" evidence="1">
    <location>
        <position position="312"/>
    </location>
    <ligand>
        <name>[4Fe-4S] cluster</name>
        <dbReference type="ChEBI" id="CHEBI:49883"/>
    </ligand>
</feature>